<comment type="function">
    <text evidence="3 5 6">Functions as a two-component phosphorelay mediator between cytokinin sensor histidine kinases and response regulators (B-type ARRs). Plays an important role in propagating cytokinin signal transduction through the multistep His-to-Asp phosphorelay.</text>
</comment>
<comment type="subunit">
    <text evidence="4 6 7 9">Interacts with the B-type response regulators ARR1 and ARR2. Binds to AHK2, AHK3, AHK4 and AHK5.</text>
</comment>
<comment type="subcellular location">
    <subcellularLocation>
        <location evidence="8">Cytoplasm</location>
        <location evidence="8">Cytosol</location>
    </subcellularLocation>
    <subcellularLocation>
        <location evidence="8">Nucleus</location>
    </subcellularLocation>
</comment>
<comment type="tissue specificity">
    <text evidence="6">Expressed in the whole plant.</text>
</comment>
<comment type="domain">
    <text>Histidine-containing phosphotransfer domain (HPt) contains an active histidine that mediates the phosphotransfer.</text>
</comment>
<comment type="PTM">
    <text>Two-component system major event consists of a His-to-Asp phosphorelay between a sensor histidine kinase (HK) and a response regulator (RR). In plants, the His-to-Asp phosphorelay involves an additional intermediate named Histidine-containing phosphotransfer protein (HPt). This multistep phosphorelay consists of a His-Asp-His-Asp sequential transfer of a phosphate group between first a His and an Asp of the HK protein, followed by the transfer to a conserved His of the HPt protein and finally the transfer to an Asp in the receiver domain of the RR protein.</text>
</comment>
<comment type="sequence caution" evidence="10">
    <conflict type="erroneous gene model prediction">
        <sequence resource="EMBL-CDS" id="AAF86510"/>
    </conflict>
</comment>
<organism>
    <name type="scientific">Arabidopsis thaliana</name>
    <name type="common">Mouse-ear cress</name>
    <dbReference type="NCBI Taxonomy" id="3702"/>
    <lineage>
        <taxon>Eukaryota</taxon>
        <taxon>Viridiplantae</taxon>
        <taxon>Streptophyta</taxon>
        <taxon>Embryophyta</taxon>
        <taxon>Tracheophyta</taxon>
        <taxon>Spermatophyta</taxon>
        <taxon>Magnoliopsida</taxon>
        <taxon>eudicotyledons</taxon>
        <taxon>Gunneridae</taxon>
        <taxon>Pentapetalae</taxon>
        <taxon>rosids</taxon>
        <taxon>malvids</taxon>
        <taxon>Brassicales</taxon>
        <taxon>Brassicaceae</taxon>
        <taxon>Camelineae</taxon>
        <taxon>Arabidopsis</taxon>
    </lineage>
</organism>
<accession>Q8L9T7</accession>
<accession>Q9LR80</accession>
<accession>Q9MAY1</accession>
<gene>
    <name type="primary">AHP5</name>
    <name type="ordered locus">At1g03430</name>
    <name type="ORF">F21B7.5</name>
</gene>
<name>AHP5_ARATH</name>
<feature type="chain" id="PRO_0000074931" description="Histidine-containing phosphotransfer protein 5">
    <location>
        <begin position="1"/>
        <end position="157"/>
    </location>
</feature>
<feature type="domain" description="HPt" evidence="2">
    <location>
        <begin position="41"/>
        <end position="148"/>
    </location>
</feature>
<feature type="modified residue" description="N-acetylmethionine" evidence="1">
    <location>
        <position position="1"/>
    </location>
</feature>
<feature type="modified residue" description="Phosphohistidine" evidence="2">
    <location>
        <position position="83"/>
    </location>
</feature>
<feature type="mutagenesis site" description="Impaired AHK4 binding." evidence="7">
    <original>H</original>
    <variation>K</variation>
    <variation>A</variation>
    <location>
        <position position="83"/>
    </location>
</feature>
<keyword id="KW-0007">Acetylation</keyword>
<keyword id="KW-0932">Cytokinin signaling pathway</keyword>
<keyword id="KW-0963">Cytoplasm</keyword>
<keyword id="KW-0539">Nucleus</keyword>
<keyword id="KW-0597">Phosphoprotein</keyword>
<keyword id="KW-1185">Reference proteome</keyword>
<keyword id="KW-0902">Two-component regulatory system</keyword>
<dbReference type="EMBL" id="AB041767">
    <property type="protein sequence ID" value="BAA94764.1"/>
    <property type="molecule type" value="mRNA"/>
</dbReference>
<dbReference type="EMBL" id="AC002560">
    <property type="protein sequence ID" value="AAF86510.1"/>
    <property type="status" value="ALT_SEQ"/>
    <property type="molecule type" value="Genomic_DNA"/>
</dbReference>
<dbReference type="EMBL" id="CP002684">
    <property type="protein sequence ID" value="AEE27570.1"/>
    <property type="molecule type" value="Genomic_DNA"/>
</dbReference>
<dbReference type="EMBL" id="AY088228">
    <property type="protein sequence ID" value="AAM65769.1"/>
    <property type="molecule type" value="mRNA"/>
</dbReference>
<dbReference type="RefSeq" id="NP_563684.1">
    <property type="nucleotide sequence ID" value="NM_100225.3"/>
</dbReference>
<dbReference type="SMR" id="Q8L9T7"/>
<dbReference type="BioGRID" id="24741">
    <property type="interactions" value="31"/>
</dbReference>
<dbReference type="FunCoup" id="Q8L9T7">
    <property type="interactions" value="328"/>
</dbReference>
<dbReference type="IntAct" id="Q8L9T7">
    <property type="interactions" value="14"/>
</dbReference>
<dbReference type="STRING" id="3702.Q8L9T7"/>
<dbReference type="PaxDb" id="3702-AT1G03430.1"/>
<dbReference type="ProteomicsDB" id="244837"/>
<dbReference type="EnsemblPlants" id="AT1G03430.1">
    <property type="protein sequence ID" value="AT1G03430.1"/>
    <property type="gene ID" value="AT1G03430"/>
</dbReference>
<dbReference type="GeneID" id="839506"/>
<dbReference type="Gramene" id="AT1G03430.1">
    <property type="protein sequence ID" value="AT1G03430.1"/>
    <property type="gene ID" value="AT1G03430"/>
</dbReference>
<dbReference type="KEGG" id="ath:AT1G03430"/>
<dbReference type="Araport" id="AT1G03430"/>
<dbReference type="TAIR" id="AT1G03430">
    <property type="gene designation" value="AHP5"/>
</dbReference>
<dbReference type="eggNOG" id="KOG4747">
    <property type="taxonomic scope" value="Eukaryota"/>
</dbReference>
<dbReference type="HOGENOM" id="CLU_111777_1_0_1"/>
<dbReference type="InParanoid" id="Q8L9T7"/>
<dbReference type="OMA" id="ITHWNIN"/>
<dbReference type="PhylomeDB" id="Q8L9T7"/>
<dbReference type="PRO" id="PR:Q8L9T7"/>
<dbReference type="Proteomes" id="UP000006548">
    <property type="component" value="Chromosome 1"/>
</dbReference>
<dbReference type="ExpressionAtlas" id="Q8L9T7">
    <property type="expression patterns" value="baseline and differential"/>
</dbReference>
<dbReference type="GO" id="GO:0005737">
    <property type="term" value="C:cytoplasm"/>
    <property type="evidence" value="ECO:0000314"/>
    <property type="project" value="UniProtKB"/>
</dbReference>
<dbReference type="GO" id="GO:0005829">
    <property type="term" value="C:cytosol"/>
    <property type="evidence" value="ECO:0007669"/>
    <property type="project" value="UniProtKB-SubCell"/>
</dbReference>
<dbReference type="GO" id="GO:0005634">
    <property type="term" value="C:nucleus"/>
    <property type="evidence" value="ECO:0000314"/>
    <property type="project" value="UniProtKB"/>
</dbReference>
<dbReference type="GO" id="GO:0009927">
    <property type="term" value="F:histidine phosphotransfer kinase activity"/>
    <property type="evidence" value="ECO:0000314"/>
    <property type="project" value="TAIR"/>
</dbReference>
<dbReference type="GO" id="GO:0043424">
    <property type="term" value="F:protein histidine kinase binding"/>
    <property type="evidence" value="ECO:0000353"/>
    <property type="project" value="UniProtKB"/>
</dbReference>
<dbReference type="GO" id="GO:0009557">
    <property type="term" value="P:antipodal cell differentiation"/>
    <property type="evidence" value="ECO:0000316"/>
    <property type="project" value="TAIR"/>
</dbReference>
<dbReference type="GO" id="GO:0009736">
    <property type="term" value="P:cytokinin-activated signaling pathway"/>
    <property type="evidence" value="ECO:0000315"/>
    <property type="project" value="TAIR"/>
</dbReference>
<dbReference type="GO" id="GO:0009560">
    <property type="term" value="P:embryo sac egg cell differentiation"/>
    <property type="evidence" value="ECO:0000316"/>
    <property type="project" value="TAIR"/>
</dbReference>
<dbReference type="GO" id="GO:0000160">
    <property type="term" value="P:phosphorelay signal transduction system"/>
    <property type="evidence" value="ECO:0000304"/>
    <property type="project" value="TAIR"/>
</dbReference>
<dbReference type="CDD" id="cd00088">
    <property type="entry name" value="HPT"/>
    <property type="match status" value="1"/>
</dbReference>
<dbReference type="FunFam" id="1.20.120.160:FF:000001">
    <property type="entry name" value="Histidine-containing phosphotransfer protein 1"/>
    <property type="match status" value="1"/>
</dbReference>
<dbReference type="Gene3D" id="1.20.120.160">
    <property type="entry name" value="HPT domain"/>
    <property type="match status" value="1"/>
</dbReference>
<dbReference type="InterPro" id="IPR045871">
    <property type="entry name" value="AHP1-5/YPD1"/>
</dbReference>
<dbReference type="InterPro" id="IPR036641">
    <property type="entry name" value="HPT_dom_sf"/>
</dbReference>
<dbReference type="InterPro" id="IPR008207">
    <property type="entry name" value="Sig_transdc_His_kin_Hpt_dom"/>
</dbReference>
<dbReference type="PANTHER" id="PTHR28242:SF13">
    <property type="entry name" value="HISTIDINE-CONTAINING PHOSPHOTRANSFER PROTEIN 5"/>
    <property type="match status" value="1"/>
</dbReference>
<dbReference type="PANTHER" id="PTHR28242">
    <property type="entry name" value="PHOSPHORELAY INTERMEDIATE PROTEIN YPD1"/>
    <property type="match status" value="1"/>
</dbReference>
<dbReference type="Pfam" id="PF01627">
    <property type="entry name" value="Hpt"/>
    <property type="match status" value="1"/>
</dbReference>
<dbReference type="SUPFAM" id="SSF47226">
    <property type="entry name" value="Histidine-containing phosphotransfer domain, HPT domain"/>
    <property type="match status" value="1"/>
</dbReference>
<dbReference type="PROSITE" id="PS50894">
    <property type="entry name" value="HPT"/>
    <property type="match status" value="1"/>
</dbReference>
<sequence length="157" mass="17925">MNTIVVAQLQRQFQDYIVSLYQQGFLDNQFSELRKLQDEGTPDFVAEVVSLFFDDCSKLINTMSISLERPDNVDFKQVDSGVHQLKGSSSSVGARRVKNVCISFKECCDVQNREGCLRCLQQVDYEYKMLKTKLQDLFNLEKQILQAGGTIPQVDIN</sequence>
<evidence type="ECO:0000250" key="1">
    <source>
        <dbReference type="UniProtKB" id="Q9ZNV8"/>
    </source>
</evidence>
<evidence type="ECO:0000255" key="2">
    <source>
        <dbReference type="PROSITE-ProRule" id="PRU00110"/>
    </source>
</evidence>
<evidence type="ECO:0000269" key="3">
    <source>
    </source>
</evidence>
<evidence type="ECO:0000269" key="4">
    <source>
    </source>
</evidence>
<evidence type="ECO:0000269" key="5">
    <source>
    </source>
</evidence>
<evidence type="ECO:0000269" key="6">
    <source>
    </source>
</evidence>
<evidence type="ECO:0000269" key="7">
    <source>
    </source>
</evidence>
<evidence type="ECO:0000269" key="8">
    <source>
    </source>
</evidence>
<evidence type="ECO:0000269" key="9">
    <source>
    </source>
</evidence>
<evidence type="ECO:0000305" key="10"/>
<proteinExistence type="evidence at protein level"/>
<protein>
    <recommendedName>
        <fullName>Histidine-containing phosphotransfer protein 5</fullName>
    </recommendedName>
</protein>
<reference key="1">
    <citation type="journal article" date="2000" name="Biosci. Biotechnol. Biochem.">
        <title>Compilation and characterization of histidine-containing phosphotransmitters implicated in His-to-Asp phosphorelay in plants: AHP signal transducers of Arabidopsis thaliana.</title>
        <authorList>
            <person name="Suzuki T."/>
            <person name="Sakurai K."/>
            <person name="Imamura A."/>
            <person name="Nakamura A."/>
            <person name="Ueguchi C."/>
            <person name="Mizuno T."/>
        </authorList>
    </citation>
    <scope>NUCLEOTIDE SEQUENCE [MRNA]</scope>
    <scope>FUNCTION</scope>
    <source>
        <strain>cv. Columbia</strain>
    </source>
</reference>
<reference key="2">
    <citation type="journal article" date="2000" name="Nature">
        <title>Sequence and analysis of chromosome 1 of the plant Arabidopsis thaliana.</title>
        <authorList>
            <person name="Theologis A."/>
            <person name="Ecker J.R."/>
            <person name="Palm C.J."/>
            <person name="Federspiel N.A."/>
            <person name="Kaul S."/>
            <person name="White O."/>
            <person name="Alonso J."/>
            <person name="Altafi H."/>
            <person name="Araujo R."/>
            <person name="Bowman C.L."/>
            <person name="Brooks S.Y."/>
            <person name="Buehler E."/>
            <person name="Chan A."/>
            <person name="Chao Q."/>
            <person name="Chen H."/>
            <person name="Cheuk R.F."/>
            <person name="Chin C.W."/>
            <person name="Chung M.K."/>
            <person name="Conn L."/>
            <person name="Conway A.B."/>
            <person name="Conway A.R."/>
            <person name="Creasy T.H."/>
            <person name="Dewar K."/>
            <person name="Dunn P."/>
            <person name="Etgu P."/>
            <person name="Feldblyum T.V."/>
            <person name="Feng J.-D."/>
            <person name="Fong B."/>
            <person name="Fujii C.Y."/>
            <person name="Gill J.E."/>
            <person name="Goldsmith A.D."/>
            <person name="Haas B."/>
            <person name="Hansen N.F."/>
            <person name="Hughes B."/>
            <person name="Huizar L."/>
            <person name="Hunter J.L."/>
            <person name="Jenkins J."/>
            <person name="Johnson-Hopson C."/>
            <person name="Khan S."/>
            <person name="Khaykin E."/>
            <person name="Kim C.J."/>
            <person name="Koo H.L."/>
            <person name="Kremenetskaia I."/>
            <person name="Kurtz D.B."/>
            <person name="Kwan A."/>
            <person name="Lam B."/>
            <person name="Langin-Hooper S."/>
            <person name="Lee A."/>
            <person name="Lee J.M."/>
            <person name="Lenz C.A."/>
            <person name="Li J.H."/>
            <person name="Li Y.-P."/>
            <person name="Lin X."/>
            <person name="Liu S.X."/>
            <person name="Liu Z.A."/>
            <person name="Luros J.S."/>
            <person name="Maiti R."/>
            <person name="Marziali A."/>
            <person name="Militscher J."/>
            <person name="Miranda M."/>
            <person name="Nguyen M."/>
            <person name="Nierman W.C."/>
            <person name="Osborne B.I."/>
            <person name="Pai G."/>
            <person name="Peterson J."/>
            <person name="Pham P.K."/>
            <person name="Rizzo M."/>
            <person name="Rooney T."/>
            <person name="Rowley D."/>
            <person name="Sakano H."/>
            <person name="Salzberg S.L."/>
            <person name="Schwartz J.R."/>
            <person name="Shinn P."/>
            <person name="Southwick A.M."/>
            <person name="Sun H."/>
            <person name="Tallon L.J."/>
            <person name="Tambunga G."/>
            <person name="Toriumi M.J."/>
            <person name="Town C.D."/>
            <person name="Utterback T."/>
            <person name="Van Aken S."/>
            <person name="Vaysberg M."/>
            <person name="Vysotskaia V.S."/>
            <person name="Walker M."/>
            <person name="Wu D."/>
            <person name="Yu G."/>
            <person name="Fraser C.M."/>
            <person name="Venter J.C."/>
            <person name="Davis R.W."/>
        </authorList>
    </citation>
    <scope>NUCLEOTIDE SEQUENCE [LARGE SCALE GENOMIC DNA]</scope>
    <source>
        <strain>cv. Columbia</strain>
    </source>
</reference>
<reference key="3">
    <citation type="journal article" date="2017" name="Plant J.">
        <title>Araport11: a complete reannotation of the Arabidopsis thaliana reference genome.</title>
        <authorList>
            <person name="Cheng C.Y."/>
            <person name="Krishnakumar V."/>
            <person name="Chan A.P."/>
            <person name="Thibaud-Nissen F."/>
            <person name="Schobel S."/>
            <person name="Town C.D."/>
        </authorList>
    </citation>
    <scope>GENOME REANNOTATION</scope>
    <source>
        <strain>cv. Columbia</strain>
    </source>
</reference>
<reference key="4">
    <citation type="submission" date="2002-03" db="EMBL/GenBank/DDBJ databases">
        <title>Full-length cDNA from Arabidopsis thaliana.</title>
        <authorList>
            <person name="Brover V.V."/>
            <person name="Troukhan M.E."/>
            <person name="Alexandrov N.A."/>
            <person name="Lu Y.-P."/>
            <person name="Flavell R.B."/>
            <person name="Feldmann K.A."/>
        </authorList>
    </citation>
    <scope>NUCLEOTIDE SEQUENCE [LARGE SCALE MRNA]</scope>
</reference>
<reference key="5">
    <citation type="journal article" date="2001" name="Plant Cell Physiol.">
        <title>The Arabidopsis sensor His-kinase, AHk4, can respond to cytokinins.</title>
        <authorList>
            <person name="Suzuki T."/>
            <person name="Miwa K."/>
            <person name="Ishikawa K."/>
            <person name="Yamada H."/>
            <person name="Aiba H."/>
            <person name="Mizuno T."/>
        </authorList>
    </citation>
    <scope>INTERACTION WITH AHK4</scope>
</reference>
<reference key="6">
    <citation type="journal article" date="2002" name="Plant Physiol.">
        <title>Two-component signal transduction pathways in Arabidopsis.</title>
        <authorList>
            <person name="Hwang I."/>
            <person name="Chen H.-C."/>
            <person name="Sheen J."/>
        </authorList>
    </citation>
    <scope>GENE FAMILY</scope>
    <scope>NOMENCLATURE</scope>
    <scope>FUNCTION</scope>
</reference>
<reference key="7">
    <citation type="journal article" date="2004" name="Biosci. Biotechnol. Biochem.">
        <title>Comparative studies of the AHP histidine-containing phosphotransmitters implicated in His-to-Asp phosphorelay in Arabidopsis thaliana.</title>
        <authorList>
            <person name="Tanaka Y."/>
            <person name="Suzuki T."/>
            <person name="Yamashino T."/>
            <person name="Mizuno T."/>
        </authorList>
    </citation>
    <scope>FUNCTION</scope>
    <scope>TISSUE SPECIFICITY</scope>
    <scope>INTERACTION</scope>
</reference>
<reference key="8">
    <citation type="journal article" date="2006" name="FEBS J.">
        <title>Analysis of protein interactions within the cytokinin-signaling pathway of Arabidopsis thaliana.</title>
        <authorList>
            <person name="Dortay H."/>
            <person name="Mehnert N."/>
            <person name="Buerkle L."/>
            <person name="Schmuelling T."/>
            <person name="Heyl A."/>
        </authorList>
    </citation>
    <scope>INTERACTION WITH AHK2; AHK3 AND AHK4</scope>
    <scope>MUTAGENESIS OF HIS-83</scope>
</reference>
<reference key="9">
    <citation type="journal article" date="2008" name="J. Proteome Res.">
        <title>Toward an interaction map of the two-component signaling pathway of Arabidopsis thaliana.</title>
        <authorList>
            <person name="Dortay H."/>
            <person name="Gruhn N."/>
            <person name="Pfeifer A."/>
            <person name="Schwerdtner M."/>
            <person name="Schmuelling T."/>
            <person name="Heyl A."/>
        </authorList>
    </citation>
    <scope>SUBCELLULAR LOCATION</scope>
</reference>
<reference key="10">
    <citation type="journal article" date="2013" name="Mol. Plant">
        <title>Structure-function analysis of Arabidopsis thaliana histidine kinase AHK5 bound to its cognate phosphotransfer protein AHP1.</title>
        <authorList>
            <person name="Bauer J."/>
            <person name="Reiss K."/>
            <person name="Veerabagu M."/>
            <person name="Heunemann M."/>
            <person name="Harter K."/>
            <person name="Stehle T."/>
        </authorList>
    </citation>
    <scope>INTERACTION WITH AHK5</scope>
</reference>